<comment type="subunit">
    <text evidence="1">Part of the 50S ribosomal subunit.</text>
</comment>
<comment type="similarity">
    <text evidence="1">Belongs to the bacterial ribosomal protein bL31 family. Type B subfamily.</text>
</comment>
<proteinExistence type="inferred from homology"/>
<protein>
    <recommendedName>
        <fullName evidence="1">Large ribosomal subunit protein bL31B</fullName>
    </recommendedName>
    <alternativeName>
        <fullName evidence="2">50S ribosomal protein L31 type B</fullName>
    </alternativeName>
</protein>
<reference key="1">
    <citation type="journal article" date="2008" name="PLoS ONE">
        <title>Comparative analysis of Acinetobacters: three genomes for three lifestyles.</title>
        <authorList>
            <person name="Vallenet D."/>
            <person name="Nordmann P."/>
            <person name="Barbe V."/>
            <person name="Poirel L."/>
            <person name="Mangenot S."/>
            <person name="Bataille E."/>
            <person name="Dossat C."/>
            <person name="Gas S."/>
            <person name="Kreimeyer A."/>
            <person name="Lenoble P."/>
            <person name="Oztas S."/>
            <person name="Poulain J."/>
            <person name="Segurens B."/>
            <person name="Robert C."/>
            <person name="Abergel C."/>
            <person name="Claverie J.-M."/>
            <person name="Raoult D."/>
            <person name="Medigue C."/>
            <person name="Weissenbach J."/>
            <person name="Cruveiller S."/>
        </authorList>
    </citation>
    <scope>NUCLEOTIDE SEQUENCE [LARGE SCALE GENOMIC DNA]</scope>
    <source>
        <strain>SDF</strain>
    </source>
</reference>
<sequence length="84" mass="9751">MRKDIHPAYQQVLFHDTNADVYFLIGSTIQTKQTKEYQGQVYPYVTLDISSASHPFYTGEVRQASNEGRVASFNKRFARFNRKS</sequence>
<gene>
    <name evidence="1" type="primary">rpmE2</name>
    <name type="ordered locus">ABSDF3120</name>
</gene>
<dbReference type="EMBL" id="CU468230">
    <property type="protein sequence ID" value="CAP02400.1"/>
    <property type="molecule type" value="Genomic_DNA"/>
</dbReference>
<dbReference type="SMR" id="B0VLD2"/>
<dbReference type="KEGG" id="abm:ABSDF3120"/>
<dbReference type="HOGENOM" id="CLU_114306_2_1_6"/>
<dbReference type="Proteomes" id="UP000001741">
    <property type="component" value="Chromosome"/>
</dbReference>
<dbReference type="GO" id="GO:1990904">
    <property type="term" value="C:ribonucleoprotein complex"/>
    <property type="evidence" value="ECO:0007669"/>
    <property type="project" value="UniProtKB-KW"/>
</dbReference>
<dbReference type="GO" id="GO:0005840">
    <property type="term" value="C:ribosome"/>
    <property type="evidence" value="ECO:0007669"/>
    <property type="project" value="UniProtKB-KW"/>
</dbReference>
<dbReference type="GO" id="GO:0003735">
    <property type="term" value="F:structural constituent of ribosome"/>
    <property type="evidence" value="ECO:0007669"/>
    <property type="project" value="InterPro"/>
</dbReference>
<dbReference type="GO" id="GO:0006412">
    <property type="term" value="P:translation"/>
    <property type="evidence" value="ECO:0007669"/>
    <property type="project" value="UniProtKB-UniRule"/>
</dbReference>
<dbReference type="Gene3D" id="4.10.830.30">
    <property type="entry name" value="Ribosomal protein L31"/>
    <property type="match status" value="1"/>
</dbReference>
<dbReference type="HAMAP" id="MF_00502">
    <property type="entry name" value="Ribosomal_bL31_2"/>
    <property type="match status" value="1"/>
</dbReference>
<dbReference type="InterPro" id="IPR034704">
    <property type="entry name" value="Ribosomal_bL28/bL31-like_sf"/>
</dbReference>
<dbReference type="InterPro" id="IPR002150">
    <property type="entry name" value="Ribosomal_bL31"/>
</dbReference>
<dbReference type="InterPro" id="IPR027493">
    <property type="entry name" value="Ribosomal_bL31_B"/>
</dbReference>
<dbReference type="InterPro" id="IPR042105">
    <property type="entry name" value="Ribosomal_bL31_sf"/>
</dbReference>
<dbReference type="NCBIfam" id="TIGR00105">
    <property type="entry name" value="L31"/>
    <property type="match status" value="1"/>
</dbReference>
<dbReference type="NCBIfam" id="NF002462">
    <property type="entry name" value="PRK01678.1"/>
    <property type="match status" value="1"/>
</dbReference>
<dbReference type="PANTHER" id="PTHR33280">
    <property type="entry name" value="50S RIBOSOMAL PROTEIN L31, CHLOROPLASTIC"/>
    <property type="match status" value="1"/>
</dbReference>
<dbReference type="PANTHER" id="PTHR33280:SF1">
    <property type="entry name" value="LARGE RIBOSOMAL SUBUNIT PROTEIN BL31C"/>
    <property type="match status" value="1"/>
</dbReference>
<dbReference type="Pfam" id="PF01197">
    <property type="entry name" value="Ribosomal_L31"/>
    <property type="match status" value="1"/>
</dbReference>
<dbReference type="PRINTS" id="PR01249">
    <property type="entry name" value="RIBOSOMALL31"/>
</dbReference>
<dbReference type="SUPFAM" id="SSF143800">
    <property type="entry name" value="L28p-like"/>
    <property type="match status" value="1"/>
</dbReference>
<dbReference type="PROSITE" id="PS01143">
    <property type="entry name" value="RIBOSOMAL_L31"/>
    <property type="match status" value="1"/>
</dbReference>
<accession>B0VLD2</accession>
<evidence type="ECO:0000255" key="1">
    <source>
        <dbReference type="HAMAP-Rule" id="MF_00502"/>
    </source>
</evidence>
<evidence type="ECO:0000305" key="2"/>
<name>RL31B_ACIBS</name>
<organism>
    <name type="scientific">Acinetobacter baumannii (strain SDF)</name>
    <dbReference type="NCBI Taxonomy" id="509170"/>
    <lineage>
        <taxon>Bacteria</taxon>
        <taxon>Pseudomonadati</taxon>
        <taxon>Pseudomonadota</taxon>
        <taxon>Gammaproteobacteria</taxon>
        <taxon>Moraxellales</taxon>
        <taxon>Moraxellaceae</taxon>
        <taxon>Acinetobacter</taxon>
        <taxon>Acinetobacter calcoaceticus/baumannii complex</taxon>
    </lineage>
</organism>
<feature type="chain" id="PRO_1000126777" description="Large ribosomal subunit protein bL31B">
    <location>
        <begin position="1"/>
        <end position="84"/>
    </location>
</feature>
<keyword id="KW-0687">Ribonucleoprotein</keyword>
<keyword id="KW-0689">Ribosomal protein</keyword>